<accession>Q9C4M3</accession>
<accession>D4GTM9</accession>
<organism>
    <name type="scientific">Haloferax volcanii (strain ATCC 29605 / DSM 3757 / JCM 8879 / NBRC 14742 / NCIMB 2012 / VKM B-1768 / DS2)</name>
    <name type="common">Halobacterium volcanii</name>
    <dbReference type="NCBI Taxonomy" id="309800"/>
    <lineage>
        <taxon>Archaea</taxon>
        <taxon>Methanobacteriati</taxon>
        <taxon>Methanobacteriota</taxon>
        <taxon>Stenosarchaea group</taxon>
        <taxon>Halobacteria</taxon>
        <taxon>Halobacteriales</taxon>
        <taxon>Haloferacaceae</taxon>
        <taxon>Haloferax</taxon>
    </lineage>
</organism>
<evidence type="ECO:0000255" key="1">
    <source>
        <dbReference type="HAMAP-Rule" id="MF_01634"/>
    </source>
</evidence>
<evidence type="ECO:0000256" key="2">
    <source>
        <dbReference type="SAM" id="MobiDB-lite"/>
    </source>
</evidence>
<evidence type="ECO:0000269" key="3">
    <source>
    </source>
</evidence>
<evidence type="ECO:0000269" key="4">
    <source>
    </source>
</evidence>
<evidence type="ECO:0000305" key="5"/>
<comment type="function">
    <text evidence="1 3 4">Exchanges the guanine residue with 7-cyano-7-deazaguanine (preQ0) at position 15 in the dihydrouridine loop (D-loop) of archaeal tRNAs.</text>
</comment>
<comment type="catalytic activity">
    <reaction evidence="1 4">
        <text>guanosine(15) in tRNA + 7-cyano-7-deazaguanine = 7-cyano-7-carbaguanosine(15) in tRNA + guanine</text>
        <dbReference type="Rhea" id="RHEA:43164"/>
        <dbReference type="Rhea" id="RHEA-COMP:10371"/>
        <dbReference type="Rhea" id="RHEA-COMP:10372"/>
        <dbReference type="ChEBI" id="CHEBI:16235"/>
        <dbReference type="ChEBI" id="CHEBI:45075"/>
        <dbReference type="ChEBI" id="CHEBI:74269"/>
        <dbReference type="ChEBI" id="CHEBI:82850"/>
        <dbReference type="EC" id="2.4.2.48"/>
    </reaction>
</comment>
<comment type="cofactor">
    <cofactor evidence="1">
        <name>Zn(2+)</name>
        <dbReference type="ChEBI" id="CHEBI:29105"/>
    </cofactor>
    <text evidence="1">Binds 1 zinc ion per subunit.</text>
</comment>
<comment type="pathway">
    <text evidence="1">tRNA modification; archaeosine-tRNA biosynthesis.</text>
</comment>
<comment type="disruption phenotype">
    <text evidence="3">Mutants lack the archaeosine modification, but do not show any growth defects.</text>
</comment>
<comment type="similarity">
    <text evidence="1">Belongs to the archaeosine tRNA-ribosyltransferase family.</text>
</comment>
<gene>
    <name evidence="1" type="primary">tgtA</name>
    <name type="synonym">tgt</name>
    <name type="ordered locus">HVO_2001</name>
</gene>
<protein>
    <recommendedName>
        <fullName evidence="1">tRNA-guanine(15) transglycosylase</fullName>
        <ecNumber evidence="1">2.4.2.48</ecNumber>
    </recommendedName>
    <alternativeName>
        <fullName evidence="1">7-cyano-7-deazaguanine tRNA-ribosyltransferase</fullName>
    </alternativeName>
    <alternativeName>
        <fullName evidence="1">Archaeal tRNA-guanine transglycosylase</fullName>
    </alternativeName>
</protein>
<keyword id="KW-0328">Glycosyltransferase</keyword>
<keyword id="KW-0479">Metal-binding</keyword>
<keyword id="KW-1185">Reference proteome</keyword>
<keyword id="KW-0808">Transferase</keyword>
<keyword id="KW-0819">tRNA processing</keyword>
<keyword id="KW-0862">Zinc</keyword>
<name>ATGT_HALVD</name>
<proteinExistence type="evidence at protein level"/>
<dbReference type="EC" id="2.4.2.48" evidence="1"/>
<dbReference type="EMBL" id="AB041011">
    <property type="protein sequence ID" value="BAB40327.1"/>
    <property type="molecule type" value="Genomic_DNA"/>
</dbReference>
<dbReference type="EMBL" id="CP001956">
    <property type="protein sequence ID" value="ADE04608.1"/>
    <property type="molecule type" value="Genomic_DNA"/>
</dbReference>
<dbReference type="RefSeq" id="WP_004041882.1">
    <property type="nucleotide sequence ID" value="NC_013967.1"/>
</dbReference>
<dbReference type="SMR" id="Q9C4M3"/>
<dbReference type="STRING" id="309800.HVO_2001"/>
<dbReference type="PaxDb" id="309800-C498_05286"/>
<dbReference type="EnsemblBacteria" id="ADE04608">
    <property type="protein sequence ID" value="ADE04608"/>
    <property type="gene ID" value="HVO_2001"/>
</dbReference>
<dbReference type="GeneID" id="8925787"/>
<dbReference type="KEGG" id="hvo:HVO_2001"/>
<dbReference type="eggNOG" id="arCOG00989">
    <property type="taxonomic scope" value="Archaea"/>
</dbReference>
<dbReference type="HOGENOM" id="CLU_030083_0_0_2"/>
<dbReference type="OrthoDB" id="6871at2157"/>
<dbReference type="BRENDA" id="2.4.2.48">
    <property type="organism ID" value="2561"/>
</dbReference>
<dbReference type="UniPathway" id="UPA00393"/>
<dbReference type="Proteomes" id="UP000008243">
    <property type="component" value="Chromosome"/>
</dbReference>
<dbReference type="GO" id="GO:0005737">
    <property type="term" value="C:cytoplasm"/>
    <property type="evidence" value="ECO:0007669"/>
    <property type="project" value="TreeGrafter"/>
</dbReference>
<dbReference type="GO" id="GO:0016763">
    <property type="term" value="F:pentosyltransferase activity"/>
    <property type="evidence" value="ECO:0007669"/>
    <property type="project" value="UniProtKB-UniRule"/>
</dbReference>
<dbReference type="GO" id="GO:0008270">
    <property type="term" value="F:zinc ion binding"/>
    <property type="evidence" value="ECO:0007669"/>
    <property type="project" value="UniProtKB-UniRule"/>
</dbReference>
<dbReference type="GO" id="GO:0002099">
    <property type="term" value="P:tRNA wobble guanine modification"/>
    <property type="evidence" value="ECO:0007669"/>
    <property type="project" value="TreeGrafter"/>
</dbReference>
<dbReference type="Gene3D" id="3.20.20.105">
    <property type="entry name" value="Queuine tRNA-ribosyltransferase-like"/>
    <property type="match status" value="1"/>
</dbReference>
<dbReference type="HAMAP" id="MF_01634">
    <property type="entry name" value="TgtA_arch"/>
    <property type="match status" value="1"/>
</dbReference>
<dbReference type="InterPro" id="IPR050076">
    <property type="entry name" value="ArchSynthase1/Queuine_TRR"/>
</dbReference>
<dbReference type="InterPro" id="IPR036511">
    <property type="entry name" value="TGT-like_sf"/>
</dbReference>
<dbReference type="InterPro" id="IPR004804">
    <property type="entry name" value="TgtA"/>
</dbReference>
<dbReference type="InterPro" id="IPR002616">
    <property type="entry name" value="tRNA_ribo_trans-like"/>
</dbReference>
<dbReference type="NCBIfam" id="TIGR00432">
    <property type="entry name" value="arcsn_tRNA_tgt"/>
    <property type="match status" value="1"/>
</dbReference>
<dbReference type="NCBIfam" id="TIGR00449">
    <property type="entry name" value="tgt_general"/>
    <property type="match status" value="1"/>
</dbReference>
<dbReference type="PANTHER" id="PTHR46499">
    <property type="entry name" value="QUEUINE TRNA-RIBOSYLTRANSFERASE"/>
    <property type="match status" value="1"/>
</dbReference>
<dbReference type="PANTHER" id="PTHR46499:SF1">
    <property type="entry name" value="QUEUINE TRNA-RIBOSYLTRANSFERASE"/>
    <property type="match status" value="1"/>
</dbReference>
<dbReference type="Pfam" id="PF01702">
    <property type="entry name" value="TGT"/>
    <property type="match status" value="1"/>
</dbReference>
<dbReference type="SUPFAM" id="SSF88802">
    <property type="entry name" value="Pre-PUA domain"/>
    <property type="match status" value="1"/>
</dbReference>
<dbReference type="SUPFAM" id="SSF51713">
    <property type="entry name" value="tRNA-guanine transglycosylase"/>
    <property type="match status" value="1"/>
</dbReference>
<reference key="1">
    <citation type="journal article" date="1997" name="J. Biol. Chem.">
        <title>Biosynthesis of archaeosine, a novel derivative of 7-deazaguanosine specific to archaeal tRNA, proceeds via a pathway involving base replacement on the tRNA polynucleotide chain.</title>
        <authorList>
            <person name="Watanabe M."/>
            <person name="Matsuo M."/>
            <person name="Tanaka S."/>
            <person name="Akimoto H."/>
            <person name="Asahi S."/>
            <person name="Nishimura S."/>
            <person name="Katze J.R."/>
            <person name="Hashizume T."/>
            <person name="Crain P.F."/>
            <person name="Mccloskey J.A."/>
            <person name="Okada N."/>
        </authorList>
    </citation>
    <scope>NUCLEOTIDE SEQUENCE [GENOMIC DNA]</scope>
    <scope>FUNCTION</scope>
    <scope>CATALYTIC ACTIVITY</scope>
    <source>
        <strain>ATCC 29605 / DSM 3757 / JCM 8879 / NBRC 14742 / NCIMB 2012 / VKM B-1768 / DS2</strain>
    </source>
</reference>
<reference key="2">
    <citation type="journal article" date="2010" name="PLoS ONE">
        <title>The complete genome sequence of Haloferax volcanii DS2, a model archaeon.</title>
        <authorList>
            <person name="Hartman A.L."/>
            <person name="Norais C."/>
            <person name="Badger J.H."/>
            <person name="Delmas S."/>
            <person name="Haldenby S."/>
            <person name="Madupu R."/>
            <person name="Robinson J."/>
            <person name="Khouri H."/>
            <person name="Ren Q."/>
            <person name="Lowe T.M."/>
            <person name="Maupin-Furlow J."/>
            <person name="Pohlschroder M."/>
            <person name="Daniels C."/>
            <person name="Pfeiffer F."/>
            <person name="Allers T."/>
            <person name="Eisen J.A."/>
        </authorList>
    </citation>
    <scope>NUCLEOTIDE SEQUENCE [LARGE SCALE GENOMIC DNA]</scope>
    <source>
        <strain>ATCC 29605 / DSM 3757 / JCM 8879 / NBRC 14742 / NCIMB 2012 / VKM B-1768 / DS2</strain>
    </source>
</reference>
<reference key="3">
    <citation type="journal article" date="2009" name="Archaea">
        <title>A Gateway platform for functional genomics in Haloferax volcanii: deletion of three tRNA modification genes.</title>
        <authorList>
            <person name="El Yacoubi B."/>
            <person name="Phillips G."/>
            <person name="Blaby I.K."/>
            <person name="Haas C.E."/>
            <person name="Cruz Y."/>
            <person name="Greenberg J."/>
            <person name="de Crecy-Lagard V."/>
        </authorList>
    </citation>
    <scope>FUNCTION</scope>
    <scope>DISRUPTION PHENOTYPE</scope>
    <source>
        <strain>DS2 / DS70</strain>
    </source>
</reference>
<feature type="chain" id="PRO_0000247870" description="tRNA-guanine(15) transglycosylase">
    <location>
        <begin position="1"/>
        <end position="516"/>
    </location>
</feature>
<feature type="region of interest" description="Disordered" evidence="2">
    <location>
        <begin position="488"/>
        <end position="516"/>
    </location>
</feature>
<feature type="compositionally biased region" description="Low complexity" evidence="2">
    <location>
        <begin position="488"/>
        <end position="502"/>
    </location>
</feature>
<feature type="active site" description="Nucleophile" evidence="1">
    <location>
        <position position="93"/>
    </location>
</feature>
<feature type="binding site" evidence="1">
    <location>
        <position position="128"/>
    </location>
    <ligand>
        <name>substrate</name>
    </ligand>
</feature>
<feature type="binding site" evidence="1">
    <location>
        <position position="196"/>
    </location>
    <ligand>
        <name>substrate</name>
    </ligand>
</feature>
<feature type="binding site" evidence="1">
    <location>
        <position position="279"/>
    </location>
    <ligand>
        <name>Zn(2+)</name>
        <dbReference type="ChEBI" id="CHEBI:29105"/>
    </ligand>
</feature>
<feature type="binding site" evidence="1">
    <location>
        <position position="281"/>
    </location>
    <ligand>
        <name>Zn(2+)</name>
        <dbReference type="ChEBI" id="CHEBI:29105"/>
    </ligand>
</feature>
<feature type="binding site" evidence="1">
    <location>
        <position position="284"/>
    </location>
    <ligand>
        <name>Zn(2+)</name>
        <dbReference type="ChEBI" id="CHEBI:29105"/>
    </ligand>
</feature>
<feature type="sequence conflict" description="In Ref. 1; BAB40327." evidence="5" ref="1">
    <original>A</original>
    <variation>V</variation>
    <location>
        <position position="238"/>
    </location>
</feature>
<sequence length="516" mass="56300">MRDHFELRDGDLAGRIGRLSVPRAGVTVETPALLPVVNPNIDTISPARLESEFGAEILITNSYIIKTNDHLREEALDVGLHEMLDFDGAIMTDSGSFQLAEYGEIDTTTEEILQFQRDIGTDIATPVDIPTPPDVAREQAEADLEITRQALADAEAADTGEMLVNAPVQGSTYPDLREEAGRHADATDLDVFPVGAVVPMMNAYRYDDMVDAVAAAKRGLGVDAPVHLFGAGHPMMLALAVALGCDLFDSAAYALYARDGRYLTVRGTEHLEDLDYLPCTCPICTEYSPDDLREKGSKRQEQLLAEHNLHVTFAELRRIKQAIRDGDLMELVEERARSHPAMLDGYRALLAHVDQLEREDPASKGAFFYASNESAHRPEVARHHARMDRLTAEGHVLLTEGGVPSGDDFDATWRVVPPFGPFPRSLSETYPLTAEVPERLDRDAYEQAARGVSRLVEENPDAAFTLAHDDWPESALARVPESVELESLSAVSERLGDEASVGGDDGDDGGSASSAE</sequence>